<accession>Q2YIU6</accession>
<gene>
    <name type="ordered locus">BAB2_0314</name>
</gene>
<evidence type="ECO:0000255" key="1"/>
<evidence type="ECO:0000305" key="2"/>
<name>Y314_BRUA2</name>
<comment type="similarity">
    <text evidence="2">Belongs to the surface antigen msp4 family.</text>
</comment>
<dbReference type="EMBL" id="AM040265">
    <property type="protein sequence ID" value="CAJ12480.1"/>
    <property type="molecule type" value="Genomic_DNA"/>
</dbReference>
<dbReference type="RefSeq" id="WP_002965726.1">
    <property type="nucleotide sequence ID" value="NZ_KN046823.1"/>
</dbReference>
<dbReference type="STRING" id="359391.BAB2_0314"/>
<dbReference type="KEGG" id="bmf:BAB2_0314"/>
<dbReference type="PATRIC" id="fig|359391.11.peg.2269"/>
<dbReference type="HOGENOM" id="CLU_057473_0_0_5"/>
<dbReference type="PhylomeDB" id="Q2YIU6"/>
<dbReference type="Proteomes" id="UP000002719">
    <property type="component" value="Chromosome II"/>
</dbReference>
<dbReference type="Gene3D" id="2.40.160.20">
    <property type="match status" value="1"/>
</dbReference>
<dbReference type="InterPro" id="IPR011250">
    <property type="entry name" value="OMP/PagP_b-brl"/>
</dbReference>
<dbReference type="InterPro" id="IPR027385">
    <property type="entry name" value="OMP_b-brl"/>
</dbReference>
<dbReference type="Pfam" id="PF13505">
    <property type="entry name" value="OMP_b-brl"/>
    <property type="match status" value="1"/>
</dbReference>
<dbReference type="SUPFAM" id="SSF56925">
    <property type="entry name" value="OMPA-like"/>
    <property type="match status" value="1"/>
</dbReference>
<feature type="signal peptide" evidence="1">
    <location>
        <begin position="1"/>
        <end position="23"/>
    </location>
</feature>
<feature type="chain" id="PRO_0000284476" description="Uncharacterized protein BAB2_0314">
    <location>
        <begin position="24"/>
        <end position="284"/>
    </location>
</feature>
<proteinExistence type="inferred from homology"/>
<reference key="1">
    <citation type="journal article" date="2005" name="Infect. Immun.">
        <title>Whole-genome analyses of speciation events in pathogenic Brucellae.</title>
        <authorList>
            <person name="Chain P.S."/>
            <person name="Comerci D.J."/>
            <person name="Tolmasky M.E."/>
            <person name="Larimer F.W."/>
            <person name="Malfatti S.A."/>
            <person name="Vergez L.M."/>
            <person name="Aguero F."/>
            <person name="Land M.L."/>
            <person name="Ugalde R.A."/>
            <person name="Garcia E."/>
        </authorList>
    </citation>
    <scope>NUCLEOTIDE SEQUENCE [LARGE SCALE GENOMIC DNA]</scope>
    <source>
        <strain>2308</strain>
    </source>
</reference>
<protein>
    <recommendedName>
        <fullName>Uncharacterized protein BAB2_0314</fullName>
    </recommendedName>
</protein>
<sequence>MKRGCAIAVMICGLITSVSAASAADLIVQEPVFEPLPQPALAGWYLRGDIGYNFKSKTGGKWDFWNQFEEPYRGVDDTFNYDDFSLKGGASYGVGVGYRFNDMLRTDLTLDYFRASINGRTNCRSYVKSSHGLNPVEDNCHYEDNSKASVWTAMANAYVDLPRVGPLTPYLGAGIGAAYVKYDTWKTSEICPTCTLQSDKDGFDSWRFAMALMAGVSYDLTDQLKLDLGYRYLRVNGGNAYGYDEQDRQVINQYGQGAGADGPQAKDNGFNIHTVRAGLRYEFR</sequence>
<keyword id="KW-1185">Reference proteome</keyword>
<keyword id="KW-0732">Signal</keyword>
<organism>
    <name type="scientific">Brucella abortus (strain 2308)</name>
    <dbReference type="NCBI Taxonomy" id="359391"/>
    <lineage>
        <taxon>Bacteria</taxon>
        <taxon>Pseudomonadati</taxon>
        <taxon>Pseudomonadota</taxon>
        <taxon>Alphaproteobacteria</taxon>
        <taxon>Hyphomicrobiales</taxon>
        <taxon>Brucellaceae</taxon>
        <taxon>Brucella/Ochrobactrum group</taxon>
        <taxon>Brucella</taxon>
    </lineage>
</organism>